<gene>
    <name evidence="1" type="primary">lolA</name>
    <name type="ordered locus">xcc-b100_2273</name>
</gene>
<keyword id="KW-0002">3D-structure</keyword>
<keyword id="KW-0143">Chaperone</keyword>
<keyword id="KW-0574">Periplasm</keyword>
<keyword id="KW-0653">Protein transport</keyword>
<keyword id="KW-0732">Signal</keyword>
<keyword id="KW-0813">Transport</keyword>
<comment type="function">
    <text evidence="1">Participates in the translocation of lipoproteins from the inner membrane to the outer membrane. Only forms a complex with a lipoprotein if the residue after the N-terminal Cys is not an aspartate (The Asp acts as a targeting signal to indicate that the lipoprotein should stay in the inner membrane).</text>
</comment>
<comment type="subunit">
    <text evidence="1">Monomer.</text>
</comment>
<comment type="subcellular location">
    <subcellularLocation>
        <location evidence="1">Periplasm</location>
    </subcellularLocation>
</comment>
<comment type="similarity">
    <text evidence="1">Belongs to the LolA family.</text>
</comment>
<organism>
    <name type="scientific">Xanthomonas campestris pv. campestris (strain B100)</name>
    <dbReference type="NCBI Taxonomy" id="509169"/>
    <lineage>
        <taxon>Bacteria</taxon>
        <taxon>Pseudomonadati</taxon>
        <taxon>Pseudomonadota</taxon>
        <taxon>Gammaproteobacteria</taxon>
        <taxon>Lysobacterales</taxon>
        <taxon>Lysobacteraceae</taxon>
        <taxon>Xanthomonas</taxon>
    </lineage>
</organism>
<name>LOLA_XANCB</name>
<dbReference type="EMBL" id="AM920689">
    <property type="protein sequence ID" value="CAP51628.1"/>
    <property type="molecule type" value="Genomic_DNA"/>
</dbReference>
<dbReference type="PDB" id="8ORN">
    <property type="method" value="X-ray"/>
    <property type="resolution" value="2.20 A"/>
    <property type="chains" value="A/C=20-209"/>
</dbReference>
<dbReference type="PDBsum" id="8ORN"/>
<dbReference type="SMR" id="B0RT42"/>
<dbReference type="KEGG" id="xca:xcc-b100_2273"/>
<dbReference type="HOGENOM" id="CLU_087560_0_0_6"/>
<dbReference type="Proteomes" id="UP000001188">
    <property type="component" value="Chromosome"/>
</dbReference>
<dbReference type="GO" id="GO:0030288">
    <property type="term" value="C:outer membrane-bounded periplasmic space"/>
    <property type="evidence" value="ECO:0007669"/>
    <property type="project" value="TreeGrafter"/>
</dbReference>
<dbReference type="GO" id="GO:0044874">
    <property type="term" value="P:lipoprotein localization to outer membrane"/>
    <property type="evidence" value="ECO:0007669"/>
    <property type="project" value="UniProtKB-UniRule"/>
</dbReference>
<dbReference type="GO" id="GO:0042953">
    <property type="term" value="P:lipoprotein transport"/>
    <property type="evidence" value="ECO:0007669"/>
    <property type="project" value="InterPro"/>
</dbReference>
<dbReference type="CDD" id="cd16325">
    <property type="entry name" value="LolA"/>
    <property type="match status" value="1"/>
</dbReference>
<dbReference type="FunFam" id="2.50.20.10:FF:000006">
    <property type="entry name" value="Outer-membrane lipoprotein carrier protein"/>
    <property type="match status" value="1"/>
</dbReference>
<dbReference type="Gene3D" id="2.50.20.10">
    <property type="entry name" value="Lipoprotein localisation LolA/LolB/LppX"/>
    <property type="match status" value="1"/>
</dbReference>
<dbReference type="HAMAP" id="MF_00240">
    <property type="entry name" value="LolA"/>
    <property type="match status" value="1"/>
</dbReference>
<dbReference type="InterPro" id="IPR029046">
    <property type="entry name" value="LolA/LolB/LppX"/>
</dbReference>
<dbReference type="InterPro" id="IPR004564">
    <property type="entry name" value="OM_lipoprot_carrier_LolA-like"/>
</dbReference>
<dbReference type="InterPro" id="IPR018323">
    <property type="entry name" value="OM_lipoprot_carrier_LolA_Pbac"/>
</dbReference>
<dbReference type="NCBIfam" id="TIGR00547">
    <property type="entry name" value="lolA"/>
    <property type="match status" value="1"/>
</dbReference>
<dbReference type="PANTHER" id="PTHR35869">
    <property type="entry name" value="OUTER-MEMBRANE LIPOPROTEIN CARRIER PROTEIN"/>
    <property type="match status" value="1"/>
</dbReference>
<dbReference type="PANTHER" id="PTHR35869:SF1">
    <property type="entry name" value="OUTER-MEMBRANE LIPOPROTEIN CARRIER PROTEIN"/>
    <property type="match status" value="1"/>
</dbReference>
<dbReference type="Pfam" id="PF03548">
    <property type="entry name" value="LolA"/>
    <property type="match status" value="1"/>
</dbReference>
<dbReference type="SUPFAM" id="SSF89392">
    <property type="entry name" value="Prokaryotic lipoproteins and lipoprotein localization factors"/>
    <property type="match status" value="1"/>
</dbReference>
<reference key="1">
    <citation type="journal article" date="2008" name="J. Biotechnol.">
        <title>The genome of Xanthomonas campestris pv. campestris B100 and its use for the reconstruction of metabolic pathways involved in xanthan biosynthesis.</title>
        <authorList>
            <person name="Vorhoelter F.-J."/>
            <person name="Schneiker S."/>
            <person name="Goesmann A."/>
            <person name="Krause L."/>
            <person name="Bekel T."/>
            <person name="Kaiser O."/>
            <person name="Linke B."/>
            <person name="Patschkowski T."/>
            <person name="Rueckert C."/>
            <person name="Schmid J."/>
            <person name="Sidhu V.K."/>
            <person name="Sieber V."/>
            <person name="Tauch A."/>
            <person name="Watt S.A."/>
            <person name="Weisshaar B."/>
            <person name="Becker A."/>
            <person name="Niehaus K."/>
            <person name="Puehler A."/>
        </authorList>
    </citation>
    <scope>NUCLEOTIDE SEQUENCE [LARGE SCALE GENOMIC DNA]</scope>
    <source>
        <strain>B100</strain>
    </source>
</reference>
<protein>
    <recommendedName>
        <fullName evidence="1">Outer-membrane lipoprotein carrier protein</fullName>
    </recommendedName>
</protein>
<proteinExistence type="evidence at protein level"/>
<accession>B0RT42</accession>
<feature type="signal peptide" evidence="1">
    <location>
        <begin position="1"/>
        <end position="21"/>
    </location>
</feature>
<feature type="chain" id="PRO_1000100730" description="Outer-membrane lipoprotein carrier protein">
    <location>
        <begin position="22"/>
        <end position="209"/>
    </location>
</feature>
<feature type="helix" evidence="2">
    <location>
        <begin position="24"/>
        <end position="30"/>
    </location>
</feature>
<feature type="turn" evidence="2">
    <location>
        <begin position="31"/>
        <end position="33"/>
    </location>
</feature>
<feature type="strand" evidence="2">
    <location>
        <begin position="35"/>
        <end position="46"/>
    </location>
</feature>
<feature type="strand" evidence="2">
    <location>
        <begin position="52"/>
        <end position="63"/>
    </location>
</feature>
<feature type="turn" evidence="2">
    <location>
        <begin position="64"/>
        <end position="66"/>
    </location>
</feature>
<feature type="strand" evidence="2">
    <location>
        <begin position="67"/>
        <end position="76"/>
    </location>
</feature>
<feature type="strand" evidence="2">
    <location>
        <begin position="78"/>
        <end position="82"/>
    </location>
</feature>
<feature type="strand" evidence="2">
    <location>
        <begin position="84"/>
        <end position="91"/>
    </location>
</feature>
<feature type="helix" evidence="2">
    <location>
        <begin position="92"/>
        <end position="94"/>
    </location>
</feature>
<feature type="strand" evidence="2">
    <location>
        <begin position="96"/>
        <end position="101"/>
    </location>
</feature>
<feature type="helix" evidence="2">
    <location>
        <begin position="105"/>
        <end position="107"/>
    </location>
</feature>
<feature type="helix" evidence="2">
    <location>
        <begin position="112"/>
        <end position="115"/>
    </location>
</feature>
<feature type="helix" evidence="2">
    <location>
        <begin position="117"/>
        <end position="119"/>
    </location>
</feature>
<feature type="helix" evidence="2">
    <location>
        <begin position="120"/>
        <end position="123"/>
    </location>
</feature>
<feature type="strand" evidence="2">
    <location>
        <begin position="124"/>
        <end position="128"/>
    </location>
</feature>
<feature type="strand" evidence="2">
    <location>
        <begin position="136"/>
        <end position="143"/>
    </location>
</feature>
<feature type="strand" evidence="2">
    <location>
        <begin position="152"/>
        <end position="159"/>
    </location>
</feature>
<feature type="strand" evidence="2">
    <location>
        <begin position="162"/>
        <end position="169"/>
    </location>
</feature>
<feature type="strand" evidence="2">
    <location>
        <begin position="175"/>
        <end position="186"/>
    </location>
</feature>
<feature type="turn" evidence="2">
    <location>
        <begin position="191"/>
        <end position="194"/>
    </location>
</feature>
<feature type="strand" evidence="2">
    <location>
        <begin position="203"/>
        <end position="207"/>
    </location>
</feature>
<evidence type="ECO:0000255" key="1">
    <source>
        <dbReference type="HAMAP-Rule" id="MF_00240"/>
    </source>
</evidence>
<evidence type="ECO:0007829" key="2">
    <source>
        <dbReference type="PDB" id="8ORN"/>
    </source>
</evidence>
<sequence>MHRQLRYAVLATALFASTAFAGARQELDTFTRGLKGLDGQFSQRVTDANGRVKENSSGRVALATPRQFRWEYAKPYKQLIVADGKKVWVFDPDLEQVTVRAQGSEEQNSPLVALIDPTRLDKQYDVSEEAAPRDGLQWLSLTPKVDTDASFQMASLGFGKDGLAKMEVVDAVGQRTAISFSGWKRNPAFAADTFRYTPGKGVDVVGDAQ</sequence>